<protein>
    <recommendedName>
        <fullName>Envelopment polyprotein</fullName>
    </recommendedName>
    <alternativeName>
        <fullName>M polyprotein</fullName>
    </alternativeName>
    <component>
        <recommendedName>
            <fullName evidence="2">Glycoprotein N</fullName>
            <shortName>Gn</shortName>
        </recommendedName>
        <alternativeName>
            <fullName>Glycoprotein G1</fullName>
        </alternativeName>
    </component>
    <component>
        <recommendedName>
            <fullName evidence="2">Glycoprotein C</fullName>
            <shortName>Gc</shortName>
        </recommendedName>
        <alternativeName>
            <fullName>Glycoprotein G2</fullName>
        </alternativeName>
    </component>
</protein>
<accession>P27315</accession>
<keyword id="KW-1015">Disulfide bond</keyword>
<keyword id="KW-1170">Fusion of virus membrane with host endosomal membrane</keyword>
<keyword id="KW-1168">Fusion of virus membrane with host membrane</keyword>
<keyword id="KW-0325">Glycoprotein</keyword>
<keyword id="KW-1038">Host endoplasmic reticulum</keyword>
<keyword id="KW-1040">Host Golgi apparatus</keyword>
<keyword id="KW-1043">Host membrane</keyword>
<keyword id="KW-1045">Host mitochondrion</keyword>
<keyword id="KW-0945">Host-virus interaction</keyword>
<keyword id="KW-1090">Inhibition of host innate immune response by virus</keyword>
<keyword id="KW-1113">Inhibition of host RLR pathway by virus</keyword>
<keyword id="KW-1110">Inhibition of host TRAFs by virus</keyword>
<keyword id="KW-0472">Membrane</keyword>
<keyword id="KW-0479">Metal-binding</keyword>
<keyword id="KW-0597">Phosphoprotein</keyword>
<keyword id="KW-0677">Repeat</keyword>
<keyword id="KW-0732">Signal</keyword>
<keyword id="KW-0812">Transmembrane</keyword>
<keyword id="KW-1133">Transmembrane helix</keyword>
<keyword id="KW-1161">Viral attachment to host cell</keyword>
<keyword id="KW-0899">Viral immunoevasion</keyword>
<keyword id="KW-1162">Viral penetration into host cytoplasm</keyword>
<keyword id="KW-0946">Virion</keyword>
<keyword id="KW-1160">Virus entry into host cell</keyword>
<keyword id="KW-0862">Zinc</keyword>
<keyword id="KW-0863">Zinc-finger</keyword>
<organismHost>
    <name type="scientific">Microtus pennsylvanicus</name>
    <name type="common">Meadow vole</name>
    <dbReference type="NCBI Taxonomy" id="10058"/>
</organismHost>
<reference key="1">
    <citation type="journal article" date="1991" name="J. Gen. Virol.">
        <title>Molecular characterization of the Prospect Hill virus M RNA segment: a comparison with the M RNA segments of other hantaviruses.</title>
        <authorList>
            <person name="Parrington M.A."/>
            <person name="Lee P.W."/>
            <person name="Kang C.Y."/>
        </authorList>
    </citation>
    <scope>NUCLEOTIDE SEQUENCE [MRNA]</scope>
</reference>
<reference key="2">
    <citation type="journal article" date="2014" name="Viruses">
        <title>Hantavirus Gn and Gc envelope glycoproteins: key structural units for virus cell entry and virus assembly.</title>
        <authorList>
            <person name="Cifuentes-Munoz N."/>
            <person name="Salazar-Quiroz N."/>
            <person name="Tischler N.D."/>
        </authorList>
    </citation>
    <scope>REVIEW</scope>
</reference>
<reference key="3">
    <citation type="journal article" date="2011" name="Front. Microbiol.">
        <title>The Structure of the Hantavirus Zinc Finger Domain is Conserved and Represents the Only Natively Folded Region of the Gn Cytoplasmic Tail.</title>
        <authorList>
            <person name="Estrada D.F."/>
            <person name="Conner M."/>
            <person name="Jeor S.C."/>
            <person name="Guzman R.N."/>
        </authorList>
    </citation>
    <scope>STRUCTURE BY NMR OF 548-602</scope>
    <scope>DOMAIN (GLYCOPROTEIN N)</scope>
</reference>
<evidence type="ECO:0000250" key="1"/>
<evidence type="ECO:0000250" key="2">
    <source>
        <dbReference type="UniProtKB" id="P08668"/>
    </source>
</evidence>
<evidence type="ECO:0000250" key="3">
    <source>
        <dbReference type="UniProtKB" id="P0DTJ1"/>
    </source>
</evidence>
<evidence type="ECO:0000250" key="4">
    <source>
        <dbReference type="UniProtKB" id="P27312"/>
    </source>
</evidence>
<evidence type="ECO:0000250" key="5">
    <source>
        <dbReference type="UniProtKB" id="P41266"/>
    </source>
</evidence>
<evidence type="ECO:0000250" key="6">
    <source>
        <dbReference type="UniProtKB" id="Q9E006"/>
    </source>
</evidence>
<evidence type="ECO:0000255" key="7"/>
<evidence type="ECO:0000255" key="8">
    <source>
        <dbReference type="PROSITE-ProRule" id="PRU00379"/>
    </source>
</evidence>
<evidence type="ECO:0000269" key="9">
    <source>
    </source>
</evidence>
<evidence type="ECO:0000305" key="10"/>
<proteinExistence type="evidence at protein level"/>
<dbReference type="EMBL" id="X55129">
    <property type="protein sequence ID" value="CAA38922.1"/>
    <property type="molecule type" value="mRNA"/>
</dbReference>
<dbReference type="PIR" id="JQ1380">
    <property type="entry name" value="GNVUPH"/>
</dbReference>
<dbReference type="SMR" id="P27315"/>
<dbReference type="GlyCosmos" id="P27315">
    <property type="glycosylation" value="4 sites, No reported glycans"/>
</dbReference>
<dbReference type="Proteomes" id="UP000242194">
    <property type="component" value="Genome"/>
</dbReference>
<dbReference type="GO" id="GO:0044167">
    <property type="term" value="C:host cell endoplasmic reticulum membrane"/>
    <property type="evidence" value="ECO:0007669"/>
    <property type="project" value="UniProtKB-SubCell"/>
</dbReference>
<dbReference type="GO" id="GO:0044178">
    <property type="term" value="C:host cell Golgi membrane"/>
    <property type="evidence" value="ECO:0007669"/>
    <property type="project" value="UniProtKB-SubCell"/>
</dbReference>
<dbReference type="GO" id="GO:0033650">
    <property type="term" value="C:host cell mitochondrion"/>
    <property type="evidence" value="ECO:0007669"/>
    <property type="project" value="UniProtKB-SubCell"/>
</dbReference>
<dbReference type="GO" id="GO:0044228">
    <property type="term" value="C:host cell surface"/>
    <property type="evidence" value="ECO:0007669"/>
    <property type="project" value="UniProtKB-SubCell"/>
</dbReference>
<dbReference type="GO" id="GO:0016020">
    <property type="term" value="C:membrane"/>
    <property type="evidence" value="ECO:0007669"/>
    <property type="project" value="UniProtKB-KW"/>
</dbReference>
<dbReference type="GO" id="GO:0055036">
    <property type="term" value="C:virion membrane"/>
    <property type="evidence" value="ECO:0007669"/>
    <property type="project" value="UniProtKB-SubCell"/>
</dbReference>
<dbReference type="GO" id="GO:0008270">
    <property type="term" value="F:zinc ion binding"/>
    <property type="evidence" value="ECO:0007669"/>
    <property type="project" value="UniProtKB-KW"/>
</dbReference>
<dbReference type="GO" id="GO:0039654">
    <property type="term" value="P:fusion of virus membrane with host endosome membrane"/>
    <property type="evidence" value="ECO:0007669"/>
    <property type="project" value="UniProtKB-KW"/>
</dbReference>
<dbReference type="GO" id="GO:0007165">
    <property type="term" value="P:signal transduction"/>
    <property type="evidence" value="ECO:0007669"/>
    <property type="project" value="InterPro"/>
</dbReference>
<dbReference type="GO" id="GO:0046718">
    <property type="term" value="P:symbiont entry into host cell"/>
    <property type="evidence" value="ECO:0007669"/>
    <property type="project" value="UniProtKB-KW"/>
</dbReference>
<dbReference type="GO" id="GO:0052170">
    <property type="term" value="P:symbiont-mediated suppression of host innate immune response"/>
    <property type="evidence" value="ECO:0007669"/>
    <property type="project" value="UniProtKB-KW"/>
</dbReference>
<dbReference type="GO" id="GO:0039527">
    <property type="term" value="P:symbiont-mediated suppression of host TRAF-mediated signal transduction"/>
    <property type="evidence" value="ECO:0007669"/>
    <property type="project" value="UniProtKB-KW"/>
</dbReference>
<dbReference type="GO" id="GO:0019062">
    <property type="term" value="P:virion attachment to host cell"/>
    <property type="evidence" value="ECO:0007669"/>
    <property type="project" value="UniProtKB-KW"/>
</dbReference>
<dbReference type="Gene3D" id="1.10.8.1320">
    <property type="match status" value="1"/>
</dbReference>
<dbReference type="InterPro" id="IPR016402">
    <property type="entry name" value="Envelope_glycoprot_Hantavirus"/>
</dbReference>
<dbReference type="InterPro" id="IPR048791">
    <property type="entry name" value="Gc_C_bunya"/>
</dbReference>
<dbReference type="InterPro" id="IPR048790">
    <property type="entry name" value="Gn-B_hanta"/>
</dbReference>
<dbReference type="InterPro" id="IPR002532">
    <property type="entry name" value="Hanta_Gc_N"/>
</dbReference>
<dbReference type="InterPro" id="IPR002534">
    <property type="entry name" value="Hanta_Gn-H"/>
</dbReference>
<dbReference type="InterPro" id="IPR012316">
    <property type="entry name" value="ITAM_motif_hantavir-typ"/>
</dbReference>
<dbReference type="Pfam" id="PF20682">
    <property type="entry name" value="Hanta_Gc_C"/>
    <property type="match status" value="1"/>
</dbReference>
<dbReference type="Pfam" id="PF01561">
    <property type="entry name" value="Hanta_Gc_N"/>
    <property type="match status" value="1"/>
</dbReference>
<dbReference type="Pfam" id="PF20679">
    <property type="entry name" value="Hanta_Gn-B"/>
    <property type="match status" value="1"/>
</dbReference>
<dbReference type="Pfam" id="PF01567">
    <property type="entry name" value="Hanta_Gn-H"/>
    <property type="match status" value="1"/>
</dbReference>
<dbReference type="Pfam" id="PF10538">
    <property type="entry name" value="ITAM_Cys-rich"/>
    <property type="match status" value="1"/>
</dbReference>
<dbReference type="PIRSF" id="PIRSF003945">
    <property type="entry name" value="M_poly_HantaV"/>
    <property type="match status" value="1"/>
</dbReference>
<dbReference type="PROSITE" id="PS51056">
    <property type="entry name" value="ITAM_2"/>
    <property type="match status" value="1"/>
</dbReference>
<feature type="signal peptide" evidence="7">
    <location>
        <begin position="1"/>
        <end position="21"/>
    </location>
</feature>
<feature type="chain" id="PRO_0000036818" description="Envelopment polyprotein">
    <location>
        <begin position="22"/>
        <end position="1142"/>
    </location>
</feature>
<feature type="chain" id="PRO_0000036819" description="Glycoprotein N" evidence="1">
    <location>
        <begin position="22"/>
        <end position="654"/>
    </location>
</feature>
<feature type="chain" id="PRO_0000036820" description="Glycoprotein C" evidence="1">
    <location>
        <begin position="655"/>
        <end position="1142"/>
    </location>
</feature>
<feature type="topological domain" description="Lumenal" evidence="7">
    <location>
        <begin position="22"/>
        <end position="489"/>
    </location>
</feature>
<feature type="transmembrane region" description="Helical" evidence="7">
    <location>
        <begin position="490"/>
        <end position="510"/>
    </location>
</feature>
<feature type="topological domain" description="Cytoplasmic" evidence="7">
    <location>
        <begin position="511"/>
        <end position="633"/>
    </location>
</feature>
<feature type="transmembrane region" description="Helical" evidence="7">
    <location>
        <begin position="634"/>
        <end position="654"/>
    </location>
</feature>
<feature type="topological domain" description="Lumenal" evidence="7">
    <location>
        <begin position="655"/>
        <end position="1110"/>
    </location>
</feature>
<feature type="transmembrane region" description="Helical" evidence="7">
    <location>
        <begin position="1111"/>
        <end position="1131"/>
    </location>
</feature>
<feature type="topological domain" description="Cytoplasmic" evidence="7">
    <location>
        <begin position="1132"/>
        <end position="1142"/>
    </location>
</feature>
<feature type="domain" description="ITAM" evidence="8">
    <location>
        <begin position="617"/>
        <end position="640"/>
    </location>
</feature>
<feature type="zinc finger region" description="CCHC-type 1" evidence="9">
    <location>
        <begin position="551"/>
        <end position="571"/>
    </location>
</feature>
<feature type="zinc finger region" description="CCHC-type 2" evidence="9">
    <location>
        <begin position="576"/>
        <end position="597"/>
    </location>
</feature>
<feature type="region of interest" description="Binding to the ribonucleoprotein" evidence="6">
    <location>
        <begin position="522"/>
        <end position="539"/>
    </location>
</feature>
<feature type="region of interest" description="Binding to the ribonucleoprotein" evidence="4">
    <location>
        <begin position="594"/>
        <end position="611"/>
    </location>
</feature>
<feature type="region of interest" description="Binding to the ribonucleoprotein" evidence="6">
    <location>
        <begin position="598"/>
        <end position="609"/>
    </location>
</feature>
<feature type="region of interest" description="Binding to the ribonucleoprotein" evidence="4">
    <location>
        <begin position="617"/>
        <end position="631"/>
    </location>
</feature>
<feature type="region of interest" description="Fusion loop" evidence="5">
    <location>
        <begin position="763"/>
        <end position="783"/>
    </location>
</feature>
<feature type="region of interest" description="Binding to the ribonucleoprotein" evidence="4">
    <location>
        <begin position="1127"/>
        <end position="1142"/>
    </location>
</feature>
<feature type="short sequence motif" description="YxxL" evidence="2">
    <location>
        <begin position="621"/>
        <end position="624"/>
    </location>
</feature>
<feature type="site" description="Cleavage; by host signal peptidase" evidence="2">
    <location>
        <begin position="654"/>
        <end position="655"/>
    </location>
</feature>
<feature type="glycosylation site" description="N-linked (GlcNAc...) asparagine; by host" evidence="7">
    <location>
        <position position="139"/>
    </location>
</feature>
<feature type="glycosylation site" description="N-linked (GlcNAc...) asparagine; by host" evidence="7">
    <location>
        <position position="353"/>
    </location>
</feature>
<feature type="glycosylation site" description="N-linked (GlcNAc...) asparagine; by host" evidence="7">
    <location>
        <position position="405"/>
    </location>
</feature>
<feature type="glycosylation site" description="N-linked (GlcNAc...) asparagine; by host" evidence="2">
    <location>
        <position position="933"/>
    </location>
</feature>
<feature type="disulfide bond" evidence="6">
    <location>
        <begin position="31"/>
        <end position="156"/>
    </location>
</feature>
<feature type="disulfide bond" evidence="6">
    <location>
        <begin position="65"/>
        <end position="162"/>
    </location>
</feature>
<feature type="disulfide bond" evidence="6">
    <location>
        <begin position="114"/>
        <end position="133"/>
    </location>
</feature>
<feature type="disulfide bond" evidence="6">
    <location>
        <begin position="138"/>
        <end position="143"/>
    </location>
</feature>
<feature type="disulfide bond" evidence="6">
    <location>
        <begin position="180"/>
        <end position="190"/>
    </location>
</feature>
<feature type="disulfide bond" evidence="6">
    <location>
        <begin position="215"/>
        <end position="253"/>
    </location>
</feature>
<feature type="disulfide bond" evidence="6">
    <location>
        <begin position="382"/>
        <end position="441"/>
    </location>
</feature>
<feature type="disulfide bond" evidence="6">
    <location>
        <begin position="386"/>
        <end position="395"/>
    </location>
</feature>
<feature type="disulfide bond" evidence="6">
    <location>
        <begin position="411"/>
        <end position="430"/>
    </location>
</feature>
<feature type="disulfide bond" evidence="6">
    <location>
        <begin position="458"/>
        <end position="481"/>
    </location>
</feature>
<feature type="disulfide bond" evidence="2">
    <location>
        <begin position="741"/>
        <end position="776"/>
    </location>
</feature>
<feature type="disulfide bond" evidence="2">
    <location>
        <begin position="745"/>
        <end position="783"/>
    </location>
</feature>
<feature type="disulfide bond" evidence="2">
    <location>
        <begin position="757"/>
        <end position="890"/>
    </location>
</feature>
<feature type="disulfide bond" evidence="2">
    <location>
        <begin position="771"/>
        <end position="901"/>
    </location>
</feature>
<feature type="disulfide bond" evidence="2">
    <location>
        <begin position="786"/>
        <end position="909"/>
    </location>
</feature>
<feature type="disulfide bond" evidence="2">
    <location>
        <begin position="812"/>
        <end position="821"/>
    </location>
</feature>
<feature type="disulfide bond" evidence="2">
    <location>
        <begin position="829"/>
        <end position="838"/>
    </location>
</feature>
<feature type="disulfide bond" evidence="2">
    <location>
        <begin position="869"/>
        <end position="873"/>
    </location>
</feature>
<feature type="disulfide bond" evidence="2">
    <location>
        <begin position="975"/>
        <end position="1005"/>
    </location>
</feature>
<feature type="disulfide bond" evidence="2">
    <location>
        <begin position="998"/>
        <end position="1050"/>
    </location>
</feature>
<feature type="disulfide bond" evidence="2">
    <location>
        <begin position="1015"/>
        <end position="1020"/>
    </location>
</feature>
<feature type="disulfide bond" evidence="2">
    <location>
        <begin position="1051"/>
        <end position="1056"/>
    </location>
</feature>
<feature type="disulfide bond" evidence="6">
    <location>
        <begin position="1090"/>
        <end position="1094"/>
    </location>
</feature>
<comment type="function">
    <molecule>Glycoprotein N</molecule>
    <text evidence="2 4 10">Forms homotetramers with glycoprotein C at the surface of the virion (By similarity). Attaches the virion to host cell receptors including integrin alpha5/ITGB1 (Probable). This attachment induces virion internalization predominantly through clathrin-dependent endocytosis (By similarity). Mediates the assembly and budding of infectious virus particles through its interaction with the nucleocapsid protein and the viral genome (By similarity). May dysregulate normal immune and endothelial cell responses through an ITAM motif (By similarity). Translocates to mitochondria, binds to host TUFM and recruits MAP1LC3B (By similarity). These interactions induce mitochondrial autophagy and therefore destruction of host MAVS leading to inhibition of type I interferon (IFN) responses (By similarity). Concomitant breakdown of glycoprotein N is apparently prevented by the nucleoprotein that may inhibit Gn-stimulated autophagosome-lysosome fusion (By similarity). Interacts with the viral genomic RNA (By similarity).</text>
</comment>
<comment type="function">
    <molecule>Glycoprotein C</molecule>
    <text evidence="2">Forms homotetramers with glycoprotein N at the surface of the virion. Attaches the virion to host cell receptors including integrin ITGAV/ITGB3. This attachment induces virion internalization predominantly through clathrin-dependent endocytosis. Class II fusion protein that promotes fusion of viral membrane with host endosomal membrane after endocytosis of the virion.</text>
</comment>
<comment type="subunit">
    <molecule>Glycoprotein N</molecule>
    <text evidence="2 3">Homodimer (By similarity). Homotetramer; forms heterotetrameric Gn-Gc spikes in the pre-fusion conformation (By similarity). Interacts (via C-terminus) with the nucleoprotein (By similarity). Interacts with host TUFM; this interaction contributes to the virus-induced degradation of mitochondria by autophagy, which leads to degradation of host MAVS and inhibition of type I interferon (IFN) responses (By similarity). Interacts with host MAP1LC3B; this interaction contributes to the virus-induced degradation of mitochondria by autophagy, which leads to degradation of host MAVS and inhibition of type I interferon (IFN) responses (By similarity).</text>
</comment>
<comment type="subunit">
    <molecule>Glycoprotein C</molecule>
    <text evidence="2 4">Homodimer. Homotetramer; forms heterotetrameric Gn-Gc spikes in the pre-fusion conformation. Homotrimer; forms homotrimer in the post-fusion conformation at acidic pH (By similarity). Interacts (via C-terminus) with the nucleoprotein (By similarity).</text>
</comment>
<comment type="subcellular location">
    <molecule>Glycoprotein N</molecule>
    <subcellularLocation>
        <location evidence="2">Virion membrane</location>
        <topology>Multi-pass membrane protein</topology>
    </subcellularLocation>
    <subcellularLocation>
        <location evidence="2">Host cell surface</location>
    </subcellularLocation>
    <subcellularLocation>
        <location evidence="2">Host Golgi apparatus membrane</location>
        <topology evidence="2">Multi-pass membrane protein</topology>
    </subcellularLocation>
    <subcellularLocation>
        <location evidence="2">Host endoplasmic reticulum membrane</location>
        <topology evidence="2">Multi-pass membrane protein</topology>
    </subcellularLocation>
    <subcellularLocation>
        <location evidence="2">Host mitochondrion</location>
    </subcellularLocation>
    <text evidence="4">Interaction between glycoprotein N and glycoprotein C is essential for proper targeting of glycoprotein N to the host Golgi complex, where virion budding occurs.</text>
</comment>
<comment type="subcellular location">
    <molecule>Glycoprotein C</molecule>
    <subcellularLocation>
        <location evidence="2">Virion membrane</location>
        <topology>Single-pass type I membrane protein</topology>
    </subcellularLocation>
    <subcellularLocation>
        <location evidence="2">Host cell surface</location>
    </subcellularLocation>
    <subcellularLocation>
        <location evidence="2">Host Golgi apparatus membrane</location>
        <topology evidence="2">Single-pass type I membrane protein</topology>
    </subcellularLocation>
    <subcellularLocation>
        <location evidence="2">Host endoplasmic reticulum membrane</location>
        <topology evidence="2">Single-pass type I membrane protein</topology>
    </subcellularLocation>
    <text evidence="2 10">Budding probably takes place at the host Golgi (Probable). Glycoprotein C cytoplasmic tail is important for efficient Golgi localization (By similarity).</text>
</comment>
<comment type="domain">
    <molecule>Glycoprotein N</molecule>
    <text evidence="2 3 4 9">The YxxL motif at the C-terminus is indispensable for the interaction with MAP1LC3B and for the Gn-mediated induction of mitochondrial autophagy (By similarity). The cytoplasmic tail is involved in the inhibition of the host innate immune response (By similarity). The C-terminus of the cytoplasmic tail is involved in binding to the viral genome and the nucleocapsid (By similarity). Contains 2 contiguous zinc-fingers (PubMed:22203819).</text>
</comment>
<comment type="domain">
    <molecule>Glycoprotein C</molecule>
    <text evidence="4">The C-terminus is necessary for proper localization in the Golgi (By similarity). The cytoplasmic tail is involved in binding to the nucleocapsid (By similarity).</text>
</comment>
<comment type="PTM">
    <molecule>Envelopment polyprotein</molecule>
    <text evidence="2">Envelope polyprotein precursor is quickly cleaved in vivo just after synthesis, presumably by host signal peptidase.</text>
</comment>
<comment type="miscellaneous">
    <text evidence="10">This virus is non-pathogenic.</text>
</comment>
<comment type="similarity">
    <text evidence="10">Belongs to the hantavirus envelope glycoprotein family.</text>
</comment>
<gene>
    <name type="primary">GP</name>
</gene>
<organism>
    <name type="scientific">Prospect Hill virus</name>
    <name type="common">PHV</name>
    <dbReference type="NCBI Taxonomy" id="3052492"/>
    <lineage>
        <taxon>Viruses</taxon>
        <taxon>Riboviria</taxon>
        <taxon>Orthornavirae</taxon>
        <taxon>Negarnaviricota</taxon>
        <taxon>Polyploviricotina</taxon>
        <taxon>Ellioviricetes</taxon>
        <taxon>Bunyavirales</taxon>
        <taxon>Hantaviridae</taxon>
        <taxon>Mammantavirinae</taxon>
        <taxon>Orthohantavirus</taxon>
    </lineage>
</organism>
<name>GP_PHV</name>
<sequence length="1142" mass="125686">MSKFCLCLSLLGVLLLQVCDTRSLLELKIECPHTVGLGQGLVIGTVDLNPVPVESVSTLKLESSCNFDVHTSSATQQAVTKWTWEKKADTAETAKAASTTFQSKSTELNLRGLCVIPTLVLETANKLRKTVTCYDLSCNQTACIPTVYLIAPIHTCVTTKSCLLGLGTQRIQVTYEKTYCVSGQLVEGTCFNPIHTMALSQPSHTYDIVTIPVRCFFIAKKTNDDTLKIEKQFETILEKSGCTAANIKGYYVCFLGATSEPIFVPTMDDFRASQILSDMAISPHGEDHDSALSSVSTFRIAGKLSGKAPSTESSDTVQGVAFSGHPLYTSLSVLASKEDPVYIWSPGIIPERNHTVCDKKTLPLTWTGYLPLPGGIEKTTQCTIFCTLAGPGADCEAYSDTGIFNISSPTCLINRVQRFRGAEQQIKFVCQRVDLDIVVYCNGMKKVILTKTLVIGQCIYTFTSVFSLMPGIAHSLAVELCVPGIHGWSTIALLATFCFGWLLIPIISLVSIKIMLLFAYMCSKYSNDSKFRLLIEKVKQEYQKTMGSMVCEVCQQECEMAKELESHKKSCPNGMCPYCMNPTESTESALQAHFKVCKLTTRFQENLRKSLNPYEPKRGCYRTLSVFRYRSRCFVGLVWCILLVLELVIWAASADTVEIKTGWTDTAHGAGVIPLKSDLELDFSLPSSATYIYRRDLQNPANEQERIPFHFQLQRQVIHAEIQNLGHWMDGTFNLKTSFHCYGACEKYAYPWQTAKCFLEKDYEFETGWGCNPGDCPGVGTGCTACGVYLDKLRSVGKVFKVISLKFTRRVCIQLGSEQSCKTIDSNDCLMTTSVKVCMIGTVSKFQPGDTLLFLGPLEEGGIIFKQWCTTTCHFGDPGDIMSTPQGMQCPEHTGAFRKKCAFATMPTCEYDGNTLSGYQRMLATRDSFQSFNITEPHITSNSLEWVDPDSSLKDHINLVVNRDVSFQDLSENPCQVGVAVSSIDGAWGSGVGFNLVCSVSLTECASFLTSIKACDAAMCYGATTANLVRGQNTVHILGKGGHSGSKFMCCHSTECSSTGLTAAAPHLDRVTGYNVIDNDKVFDDGSPECGVHCWFKKSGEWLMGILSGNWMVVAVLVVLLILSIFLFSLCCPRRVVHKKSS</sequence>